<evidence type="ECO:0000255" key="1">
    <source>
        <dbReference type="HAMAP-Rule" id="MF_01454"/>
    </source>
</evidence>
<evidence type="ECO:0000255" key="2">
    <source>
        <dbReference type="PROSITE-ProRule" id="PRU01229"/>
    </source>
</evidence>
<evidence type="ECO:0000255" key="3">
    <source>
        <dbReference type="PROSITE-ProRule" id="PRU01231"/>
    </source>
</evidence>
<reference key="1">
    <citation type="submission" date="2005-03" db="EMBL/GenBank/DDBJ databases">
        <title>Comparison of the complete genome sequences of Rhodococcus erythropolis PR4 and Rhodococcus opacus B4.</title>
        <authorList>
            <person name="Takarada H."/>
            <person name="Sekine M."/>
            <person name="Hosoyama A."/>
            <person name="Yamada R."/>
            <person name="Fujisawa T."/>
            <person name="Omata S."/>
            <person name="Shimizu A."/>
            <person name="Tsukatani N."/>
            <person name="Tanikawa S."/>
            <person name="Fujita N."/>
            <person name="Harayama S."/>
        </authorList>
    </citation>
    <scope>NUCLEOTIDE SEQUENCE [LARGE SCALE GENOMIC DNA]</scope>
    <source>
        <strain>PR4 / NBRC 100887</strain>
    </source>
</reference>
<proteinExistence type="inferred from homology"/>
<organism>
    <name type="scientific">Rhodococcus erythropolis (strain PR4 / NBRC 100887)</name>
    <dbReference type="NCBI Taxonomy" id="234621"/>
    <lineage>
        <taxon>Bacteria</taxon>
        <taxon>Bacillati</taxon>
        <taxon>Actinomycetota</taxon>
        <taxon>Actinomycetes</taxon>
        <taxon>Mycobacteriales</taxon>
        <taxon>Nocardiaceae</taxon>
        <taxon>Rhodococcus</taxon>
        <taxon>Rhodococcus erythropolis group</taxon>
    </lineage>
</organism>
<dbReference type="EC" id="3.6.5.-" evidence="1"/>
<dbReference type="EMBL" id="AP008957">
    <property type="protein sequence ID" value="BAH34500.1"/>
    <property type="molecule type" value="Genomic_DNA"/>
</dbReference>
<dbReference type="SMR" id="C1A1L5"/>
<dbReference type="KEGG" id="rer:RER_37920"/>
<dbReference type="eggNOG" id="COG0536">
    <property type="taxonomic scope" value="Bacteria"/>
</dbReference>
<dbReference type="HOGENOM" id="CLU_011747_2_1_11"/>
<dbReference type="Proteomes" id="UP000002204">
    <property type="component" value="Chromosome"/>
</dbReference>
<dbReference type="GO" id="GO:0005737">
    <property type="term" value="C:cytoplasm"/>
    <property type="evidence" value="ECO:0007669"/>
    <property type="project" value="UniProtKB-SubCell"/>
</dbReference>
<dbReference type="GO" id="GO:0005525">
    <property type="term" value="F:GTP binding"/>
    <property type="evidence" value="ECO:0007669"/>
    <property type="project" value="UniProtKB-UniRule"/>
</dbReference>
<dbReference type="GO" id="GO:0003924">
    <property type="term" value="F:GTPase activity"/>
    <property type="evidence" value="ECO:0007669"/>
    <property type="project" value="UniProtKB-UniRule"/>
</dbReference>
<dbReference type="GO" id="GO:0000287">
    <property type="term" value="F:magnesium ion binding"/>
    <property type="evidence" value="ECO:0007669"/>
    <property type="project" value="InterPro"/>
</dbReference>
<dbReference type="GO" id="GO:0042254">
    <property type="term" value="P:ribosome biogenesis"/>
    <property type="evidence" value="ECO:0007669"/>
    <property type="project" value="UniProtKB-UniRule"/>
</dbReference>
<dbReference type="CDD" id="cd01898">
    <property type="entry name" value="Obg"/>
    <property type="match status" value="1"/>
</dbReference>
<dbReference type="FunFam" id="2.70.210.12:FF:000001">
    <property type="entry name" value="GTPase Obg"/>
    <property type="match status" value="1"/>
</dbReference>
<dbReference type="Gene3D" id="3.30.300.350">
    <property type="entry name" value="GTP-binding protein OBG, C-terminal domain"/>
    <property type="match status" value="1"/>
</dbReference>
<dbReference type="Gene3D" id="2.70.210.12">
    <property type="entry name" value="GTP1/OBG domain"/>
    <property type="match status" value="1"/>
</dbReference>
<dbReference type="Gene3D" id="3.40.50.300">
    <property type="entry name" value="P-loop containing nucleotide triphosphate hydrolases"/>
    <property type="match status" value="1"/>
</dbReference>
<dbReference type="HAMAP" id="MF_01454">
    <property type="entry name" value="GTPase_Obg"/>
    <property type="match status" value="1"/>
</dbReference>
<dbReference type="InterPro" id="IPR031167">
    <property type="entry name" value="G_OBG"/>
</dbReference>
<dbReference type="InterPro" id="IPR006073">
    <property type="entry name" value="GTP-bd"/>
</dbReference>
<dbReference type="InterPro" id="IPR014100">
    <property type="entry name" value="GTP-bd_Obg/CgtA"/>
</dbReference>
<dbReference type="InterPro" id="IPR036346">
    <property type="entry name" value="GTP-bd_prot_GTP1/OBG_C_sf"/>
</dbReference>
<dbReference type="InterPro" id="IPR006074">
    <property type="entry name" value="GTP1-OBG_CS"/>
</dbReference>
<dbReference type="InterPro" id="IPR006169">
    <property type="entry name" value="GTP1_OBG_dom"/>
</dbReference>
<dbReference type="InterPro" id="IPR036726">
    <property type="entry name" value="GTP1_OBG_dom_sf"/>
</dbReference>
<dbReference type="InterPro" id="IPR045086">
    <property type="entry name" value="OBG_GTPase"/>
</dbReference>
<dbReference type="InterPro" id="IPR015349">
    <property type="entry name" value="OCT_dom"/>
</dbReference>
<dbReference type="InterPro" id="IPR027417">
    <property type="entry name" value="P-loop_NTPase"/>
</dbReference>
<dbReference type="NCBIfam" id="TIGR02729">
    <property type="entry name" value="Obg_CgtA"/>
    <property type="match status" value="1"/>
</dbReference>
<dbReference type="NCBIfam" id="TIGR03595">
    <property type="entry name" value="Obg_CgtA_exten"/>
    <property type="match status" value="1"/>
</dbReference>
<dbReference type="NCBIfam" id="NF008954">
    <property type="entry name" value="PRK12296.1"/>
    <property type="match status" value="1"/>
</dbReference>
<dbReference type="NCBIfam" id="NF008955">
    <property type="entry name" value="PRK12297.1"/>
    <property type="match status" value="1"/>
</dbReference>
<dbReference type="NCBIfam" id="NF008956">
    <property type="entry name" value="PRK12299.1"/>
    <property type="match status" value="1"/>
</dbReference>
<dbReference type="PANTHER" id="PTHR11702">
    <property type="entry name" value="DEVELOPMENTALLY REGULATED GTP-BINDING PROTEIN-RELATED"/>
    <property type="match status" value="1"/>
</dbReference>
<dbReference type="PANTHER" id="PTHR11702:SF31">
    <property type="entry name" value="MITOCHONDRIAL RIBOSOME-ASSOCIATED GTPASE 2"/>
    <property type="match status" value="1"/>
</dbReference>
<dbReference type="Pfam" id="PF09269">
    <property type="entry name" value="DUF1967"/>
    <property type="match status" value="1"/>
</dbReference>
<dbReference type="Pfam" id="PF01018">
    <property type="entry name" value="GTP1_OBG"/>
    <property type="match status" value="1"/>
</dbReference>
<dbReference type="Pfam" id="PF01926">
    <property type="entry name" value="MMR_HSR1"/>
    <property type="match status" value="1"/>
</dbReference>
<dbReference type="PRINTS" id="PR00326">
    <property type="entry name" value="GTP1OBG"/>
</dbReference>
<dbReference type="SUPFAM" id="SSF102741">
    <property type="entry name" value="Obg GTP-binding protein C-terminal domain"/>
    <property type="match status" value="1"/>
</dbReference>
<dbReference type="SUPFAM" id="SSF82051">
    <property type="entry name" value="Obg GTP-binding protein N-terminal domain"/>
    <property type="match status" value="1"/>
</dbReference>
<dbReference type="SUPFAM" id="SSF52540">
    <property type="entry name" value="P-loop containing nucleoside triphosphate hydrolases"/>
    <property type="match status" value="1"/>
</dbReference>
<dbReference type="PROSITE" id="PS51710">
    <property type="entry name" value="G_OBG"/>
    <property type="match status" value="1"/>
</dbReference>
<dbReference type="PROSITE" id="PS00905">
    <property type="entry name" value="GTP1_OBG"/>
    <property type="match status" value="1"/>
</dbReference>
<dbReference type="PROSITE" id="PS51883">
    <property type="entry name" value="OBG"/>
    <property type="match status" value="1"/>
</dbReference>
<dbReference type="PROSITE" id="PS51881">
    <property type="entry name" value="OCT"/>
    <property type="match status" value="1"/>
</dbReference>
<feature type="chain" id="PRO_0000386186" description="GTPase Obg">
    <location>
        <begin position="1"/>
        <end position="483"/>
    </location>
</feature>
<feature type="domain" description="Obg" evidence="3">
    <location>
        <begin position="2"/>
        <end position="159"/>
    </location>
</feature>
<feature type="domain" description="OBG-type G" evidence="1">
    <location>
        <begin position="160"/>
        <end position="340"/>
    </location>
</feature>
<feature type="domain" description="OCT" evidence="2">
    <location>
        <begin position="358"/>
        <end position="438"/>
    </location>
</feature>
<feature type="binding site" evidence="1">
    <location>
        <begin position="166"/>
        <end position="173"/>
    </location>
    <ligand>
        <name>GTP</name>
        <dbReference type="ChEBI" id="CHEBI:37565"/>
    </ligand>
</feature>
<feature type="binding site" evidence="1">
    <location>
        <position position="173"/>
    </location>
    <ligand>
        <name>Mg(2+)</name>
        <dbReference type="ChEBI" id="CHEBI:18420"/>
    </ligand>
</feature>
<feature type="binding site" evidence="1">
    <location>
        <begin position="191"/>
        <end position="195"/>
    </location>
    <ligand>
        <name>GTP</name>
        <dbReference type="ChEBI" id="CHEBI:37565"/>
    </ligand>
</feature>
<feature type="binding site" evidence="1">
    <location>
        <position position="193"/>
    </location>
    <ligand>
        <name>Mg(2+)</name>
        <dbReference type="ChEBI" id="CHEBI:18420"/>
    </ligand>
</feature>
<feature type="binding site" evidence="1">
    <location>
        <begin position="212"/>
        <end position="215"/>
    </location>
    <ligand>
        <name>GTP</name>
        <dbReference type="ChEBI" id="CHEBI:37565"/>
    </ligand>
</feature>
<feature type="binding site" evidence="1">
    <location>
        <begin position="292"/>
        <end position="295"/>
    </location>
    <ligand>
        <name>GTP</name>
        <dbReference type="ChEBI" id="CHEBI:37565"/>
    </ligand>
</feature>
<feature type="binding site" evidence="1">
    <location>
        <begin position="321"/>
        <end position="323"/>
    </location>
    <ligand>
        <name>GTP</name>
        <dbReference type="ChEBI" id="CHEBI:37565"/>
    </ligand>
</feature>
<keyword id="KW-0963">Cytoplasm</keyword>
<keyword id="KW-0342">GTP-binding</keyword>
<keyword id="KW-0378">Hydrolase</keyword>
<keyword id="KW-0460">Magnesium</keyword>
<keyword id="KW-0479">Metal-binding</keyword>
<keyword id="KW-0547">Nucleotide-binding</keyword>
<sequence>MSRFIDRVVLHVSAGKGGNGCASVHREKFKPLGGPDGANGGRGGDVILVVDENIHTLLDFHFHPNAKATNGKQGAGSNREGANGEDLILKVPDGTVVLDTDGNVLADLVGVGSRYDAAQGGRGGLGNAALASKARKAPGFALLGEDGVERDLVLELKSVADVGLLGFPSAGKSSLVSVLSAAKPKIADYPFTTLVPNLGVVSSGDTTFTVADVPGLIPGASEGRGLGLDFLRHIERCAVLAHVIDCATLDPGRDPISDIDALEAELAAYTPALSGDSGLGDLDKRPRVVILNKTDVPEAAELAEMVTPEIEARGWPVFTISAVSREGLRPLTFALAKMVRDYREAHPKPEPKRQVIRPVKVKDSSFTIEKDPDIPGGFVVRGTRPERWIRQTAFDNDEAVGYLADRLARLGVEDALVKKGAQPGASVTIGDVSFEWEPMTPAGIDLTRTGRGTDPRLDQVERIGADERKHARRVRRGLLDEDA</sequence>
<gene>
    <name evidence="1" type="primary">obg</name>
    <name type="ordered locus">RER_37920</name>
</gene>
<comment type="function">
    <text evidence="1">An essential GTPase which binds GTP, GDP and possibly (p)ppGpp with moderate affinity, with high nucleotide exchange rates and a fairly low GTP hydrolysis rate. Plays a role in control of the cell cycle, stress response, ribosome biogenesis and in those bacteria that undergo differentiation, in morphogenesis control.</text>
</comment>
<comment type="cofactor">
    <cofactor evidence="1">
        <name>Mg(2+)</name>
        <dbReference type="ChEBI" id="CHEBI:18420"/>
    </cofactor>
</comment>
<comment type="subunit">
    <text evidence="1">Monomer.</text>
</comment>
<comment type="subcellular location">
    <subcellularLocation>
        <location evidence="1">Cytoplasm</location>
    </subcellularLocation>
</comment>
<comment type="similarity">
    <text evidence="1">Belongs to the TRAFAC class OBG-HflX-like GTPase superfamily. OBG GTPase family.</text>
</comment>
<name>OBG_RHOE4</name>
<accession>C1A1L5</accession>
<protein>
    <recommendedName>
        <fullName evidence="1">GTPase Obg</fullName>
        <ecNumber evidence="1">3.6.5.-</ecNumber>
    </recommendedName>
    <alternativeName>
        <fullName evidence="1">GTP-binding protein Obg</fullName>
    </alternativeName>
</protein>